<protein>
    <recommendedName>
        <fullName evidence="1">Elongation factor G</fullName>
        <shortName evidence="1">EF-G</shortName>
    </recommendedName>
</protein>
<evidence type="ECO:0000255" key="1">
    <source>
        <dbReference type="HAMAP-Rule" id="MF_00054"/>
    </source>
</evidence>
<feature type="chain" id="PRO_1000008831" description="Elongation factor G">
    <location>
        <begin position="1"/>
        <end position="692"/>
    </location>
</feature>
<feature type="domain" description="tr-type G">
    <location>
        <begin position="8"/>
        <end position="283"/>
    </location>
</feature>
<feature type="binding site" evidence="1">
    <location>
        <begin position="17"/>
        <end position="24"/>
    </location>
    <ligand>
        <name>GTP</name>
        <dbReference type="ChEBI" id="CHEBI:37565"/>
    </ligand>
</feature>
<feature type="binding site" evidence="1">
    <location>
        <begin position="81"/>
        <end position="85"/>
    </location>
    <ligand>
        <name>GTP</name>
        <dbReference type="ChEBI" id="CHEBI:37565"/>
    </ligand>
</feature>
<feature type="binding site" evidence="1">
    <location>
        <begin position="135"/>
        <end position="138"/>
    </location>
    <ligand>
        <name>GTP</name>
        <dbReference type="ChEBI" id="CHEBI:37565"/>
    </ligand>
</feature>
<keyword id="KW-0963">Cytoplasm</keyword>
<keyword id="KW-0251">Elongation factor</keyword>
<keyword id="KW-0342">GTP-binding</keyword>
<keyword id="KW-0547">Nucleotide-binding</keyword>
<keyword id="KW-0648">Protein biosynthesis</keyword>
<name>EFG_HELAH</name>
<dbReference type="EMBL" id="AM260522">
    <property type="protein sequence ID" value="CAK00287.1"/>
    <property type="molecule type" value="Genomic_DNA"/>
</dbReference>
<dbReference type="RefSeq" id="WP_011578372.1">
    <property type="nucleotide sequence ID" value="NC_008229.1"/>
</dbReference>
<dbReference type="SMR" id="Q17VN9"/>
<dbReference type="STRING" id="382638.Hac_1575"/>
<dbReference type="GeneID" id="31758827"/>
<dbReference type="KEGG" id="hac:Hac_1575"/>
<dbReference type="eggNOG" id="COG0480">
    <property type="taxonomic scope" value="Bacteria"/>
</dbReference>
<dbReference type="HOGENOM" id="CLU_002794_4_1_7"/>
<dbReference type="OrthoDB" id="9804431at2"/>
<dbReference type="BioCyc" id="HACI382638:HAC_RS06630-MONOMER"/>
<dbReference type="Proteomes" id="UP000000775">
    <property type="component" value="Chromosome"/>
</dbReference>
<dbReference type="GO" id="GO:0005737">
    <property type="term" value="C:cytoplasm"/>
    <property type="evidence" value="ECO:0007669"/>
    <property type="project" value="UniProtKB-SubCell"/>
</dbReference>
<dbReference type="GO" id="GO:0005525">
    <property type="term" value="F:GTP binding"/>
    <property type="evidence" value="ECO:0007669"/>
    <property type="project" value="UniProtKB-UniRule"/>
</dbReference>
<dbReference type="GO" id="GO:0003924">
    <property type="term" value="F:GTPase activity"/>
    <property type="evidence" value="ECO:0007669"/>
    <property type="project" value="InterPro"/>
</dbReference>
<dbReference type="GO" id="GO:0003746">
    <property type="term" value="F:translation elongation factor activity"/>
    <property type="evidence" value="ECO:0007669"/>
    <property type="project" value="UniProtKB-UniRule"/>
</dbReference>
<dbReference type="GO" id="GO:0032790">
    <property type="term" value="P:ribosome disassembly"/>
    <property type="evidence" value="ECO:0007669"/>
    <property type="project" value="TreeGrafter"/>
</dbReference>
<dbReference type="CDD" id="cd01886">
    <property type="entry name" value="EF-G"/>
    <property type="match status" value="1"/>
</dbReference>
<dbReference type="CDD" id="cd16262">
    <property type="entry name" value="EFG_III"/>
    <property type="match status" value="1"/>
</dbReference>
<dbReference type="CDD" id="cd01434">
    <property type="entry name" value="EFG_mtEFG1_IV"/>
    <property type="match status" value="1"/>
</dbReference>
<dbReference type="CDD" id="cd03713">
    <property type="entry name" value="EFG_mtEFG_C"/>
    <property type="match status" value="1"/>
</dbReference>
<dbReference type="CDD" id="cd04088">
    <property type="entry name" value="EFG_mtEFG_II"/>
    <property type="match status" value="1"/>
</dbReference>
<dbReference type="FunFam" id="2.40.30.10:FF:000006">
    <property type="entry name" value="Elongation factor G"/>
    <property type="match status" value="1"/>
</dbReference>
<dbReference type="FunFam" id="3.30.230.10:FF:000003">
    <property type="entry name" value="Elongation factor G"/>
    <property type="match status" value="1"/>
</dbReference>
<dbReference type="FunFam" id="3.30.70.240:FF:000001">
    <property type="entry name" value="Elongation factor G"/>
    <property type="match status" value="1"/>
</dbReference>
<dbReference type="FunFam" id="3.30.70.870:FF:000001">
    <property type="entry name" value="Elongation factor G"/>
    <property type="match status" value="1"/>
</dbReference>
<dbReference type="FunFam" id="3.40.50.300:FF:000029">
    <property type="entry name" value="Elongation factor G"/>
    <property type="match status" value="1"/>
</dbReference>
<dbReference type="Gene3D" id="3.30.230.10">
    <property type="match status" value="1"/>
</dbReference>
<dbReference type="Gene3D" id="3.30.70.240">
    <property type="match status" value="1"/>
</dbReference>
<dbReference type="Gene3D" id="3.30.70.870">
    <property type="entry name" value="Elongation Factor G (Translational Gtpase), domain 3"/>
    <property type="match status" value="1"/>
</dbReference>
<dbReference type="Gene3D" id="3.40.50.300">
    <property type="entry name" value="P-loop containing nucleotide triphosphate hydrolases"/>
    <property type="match status" value="1"/>
</dbReference>
<dbReference type="Gene3D" id="2.40.30.10">
    <property type="entry name" value="Translation factors"/>
    <property type="match status" value="1"/>
</dbReference>
<dbReference type="HAMAP" id="MF_00054_B">
    <property type="entry name" value="EF_G_EF_2_B"/>
    <property type="match status" value="1"/>
</dbReference>
<dbReference type="InterPro" id="IPR041095">
    <property type="entry name" value="EFG_II"/>
</dbReference>
<dbReference type="InterPro" id="IPR009022">
    <property type="entry name" value="EFG_III"/>
</dbReference>
<dbReference type="InterPro" id="IPR035647">
    <property type="entry name" value="EFG_III/V"/>
</dbReference>
<dbReference type="InterPro" id="IPR047872">
    <property type="entry name" value="EFG_IV"/>
</dbReference>
<dbReference type="InterPro" id="IPR035649">
    <property type="entry name" value="EFG_V"/>
</dbReference>
<dbReference type="InterPro" id="IPR000640">
    <property type="entry name" value="EFG_V-like"/>
</dbReference>
<dbReference type="InterPro" id="IPR004161">
    <property type="entry name" value="EFTu-like_2"/>
</dbReference>
<dbReference type="InterPro" id="IPR031157">
    <property type="entry name" value="G_TR_CS"/>
</dbReference>
<dbReference type="InterPro" id="IPR027417">
    <property type="entry name" value="P-loop_NTPase"/>
</dbReference>
<dbReference type="InterPro" id="IPR020568">
    <property type="entry name" value="Ribosomal_Su5_D2-typ_SF"/>
</dbReference>
<dbReference type="InterPro" id="IPR014721">
    <property type="entry name" value="Ribsml_uS5_D2-typ_fold_subgr"/>
</dbReference>
<dbReference type="InterPro" id="IPR005225">
    <property type="entry name" value="Small_GTP-bd"/>
</dbReference>
<dbReference type="InterPro" id="IPR000795">
    <property type="entry name" value="T_Tr_GTP-bd_dom"/>
</dbReference>
<dbReference type="InterPro" id="IPR009000">
    <property type="entry name" value="Transl_B-barrel_sf"/>
</dbReference>
<dbReference type="InterPro" id="IPR004540">
    <property type="entry name" value="Transl_elong_EFG/EF2"/>
</dbReference>
<dbReference type="InterPro" id="IPR005517">
    <property type="entry name" value="Transl_elong_EFG/EF2_IV"/>
</dbReference>
<dbReference type="NCBIfam" id="TIGR00484">
    <property type="entry name" value="EF-G"/>
    <property type="match status" value="1"/>
</dbReference>
<dbReference type="NCBIfam" id="NF009379">
    <property type="entry name" value="PRK12740.1-3"/>
    <property type="match status" value="1"/>
</dbReference>
<dbReference type="NCBIfam" id="NF009381">
    <property type="entry name" value="PRK12740.1-5"/>
    <property type="match status" value="1"/>
</dbReference>
<dbReference type="NCBIfam" id="TIGR00231">
    <property type="entry name" value="small_GTP"/>
    <property type="match status" value="1"/>
</dbReference>
<dbReference type="PANTHER" id="PTHR43261:SF1">
    <property type="entry name" value="RIBOSOME-RELEASING FACTOR 2, MITOCHONDRIAL"/>
    <property type="match status" value="1"/>
</dbReference>
<dbReference type="PANTHER" id="PTHR43261">
    <property type="entry name" value="TRANSLATION ELONGATION FACTOR G-RELATED"/>
    <property type="match status" value="1"/>
</dbReference>
<dbReference type="Pfam" id="PF00679">
    <property type="entry name" value="EFG_C"/>
    <property type="match status" value="1"/>
</dbReference>
<dbReference type="Pfam" id="PF14492">
    <property type="entry name" value="EFG_III"/>
    <property type="match status" value="1"/>
</dbReference>
<dbReference type="Pfam" id="PF03764">
    <property type="entry name" value="EFG_IV"/>
    <property type="match status" value="1"/>
</dbReference>
<dbReference type="Pfam" id="PF00009">
    <property type="entry name" value="GTP_EFTU"/>
    <property type="match status" value="1"/>
</dbReference>
<dbReference type="Pfam" id="PF03144">
    <property type="entry name" value="GTP_EFTU_D2"/>
    <property type="match status" value="1"/>
</dbReference>
<dbReference type="PRINTS" id="PR00315">
    <property type="entry name" value="ELONGATNFCT"/>
</dbReference>
<dbReference type="SMART" id="SM00838">
    <property type="entry name" value="EFG_C"/>
    <property type="match status" value="1"/>
</dbReference>
<dbReference type="SMART" id="SM00889">
    <property type="entry name" value="EFG_IV"/>
    <property type="match status" value="1"/>
</dbReference>
<dbReference type="SUPFAM" id="SSF54980">
    <property type="entry name" value="EF-G C-terminal domain-like"/>
    <property type="match status" value="2"/>
</dbReference>
<dbReference type="SUPFAM" id="SSF52540">
    <property type="entry name" value="P-loop containing nucleoside triphosphate hydrolases"/>
    <property type="match status" value="1"/>
</dbReference>
<dbReference type="SUPFAM" id="SSF54211">
    <property type="entry name" value="Ribosomal protein S5 domain 2-like"/>
    <property type="match status" value="1"/>
</dbReference>
<dbReference type="SUPFAM" id="SSF50447">
    <property type="entry name" value="Translation proteins"/>
    <property type="match status" value="1"/>
</dbReference>
<dbReference type="PROSITE" id="PS00301">
    <property type="entry name" value="G_TR_1"/>
    <property type="match status" value="1"/>
</dbReference>
<dbReference type="PROSITE" id="PS51722">
    <property type="entry name" value="G_TR_2"/>
    <property type="match status" value="1"/>
</dbReference>
<reference key="1">
    <citation type="journal article" date="2006" name="PLoS Genet.">
        <title>Who ate whom? Adaptive Helicobacter genomic changes that accompanied a host jump from early humans to large felines.</title>
        <authorList>
            <person name="Eppinger M."/>
            <person name="Baar C."/>
            <person name="Linz B."/>
            <person name="Raddatz G."/>
            <person name="Lanz C."/>
            <person name="Keller H."/>
            <person name="Morelli G."/>
            <person name="Gressmann H."/>
            <person name="Achtman M."/>
            <person name="Schuster S.C."/>
        </authorList>
    </citation>
    <scope>NUCLEOTIDE SEQUENCE [LARGE SCALE GENOMIC DNA]</scope>
    <source>
        <strain>Sheeba</strain>
    </source>
</reference>
<organism>
    <name type="scientific">Helicobacter acinonychis (strain Sheeba)</name>
    <dbReference type="NCBI Taxonomy" id="382638"/>
    <lineage>
        <taxon>Bacteria</taxon>
        <taxon>Pseudomonadati</taxon>
        <taxon>Campylobacterota</taxon>
        <taxon>Epsilonproteobacteria</taxon>
        <taxon>Campylobacterales</taxon>
        <taxon>Helicobacteraceae</taxon>
        <taxon>Helicobacter</taxon>
    </lineage>
</organism>
<proteinExistence type="inferred from homology"/>
<accession>Q17VN9</accession>
<comment type="function">
    <text evidence="1">Catalyzes the GTP-dependent ribosomal translocation step during translation elongation. During this step, the ribosome changes from the pre-translocational (PRE) to the post-translocational (POST) state as the newly formed A-site-bound peptidyl-tRNA and P-site-bound deacylated tRNA move to the P and E sites, respectively. Catalyzes the coordinated movement of the two tRNA molecules, the mRNA and conformational changes in the ribosome.</text>
</comment>
<comment type="subcellular location">
    <subcellularLocation>
        <location evidence="1">Cytoplasm</location>
    </subcellularLocation>
</comment>
<comment type="similarity">
    <text evidence="1">Belongs to the TRAFAC class translation factor GTPase superfamily. Classic translation factor GTPase family. EF-G/EF-2 subfamily.</text>
</comment>
<gene>
    <name evidence="1" type="primary">fusA</name>
    <name type="ordered locus">Hac_1575</name>
</gene>
<sequence>MARKTPLNRIRNIGIAAHIDAGKTTTSERILFYTGVSHKIGEVHDGAATMDWMEQEKERGITITSAATTCFWKDHQINLIDTPGHVDFTIEVERSMRVLDGAVSVFCSVGGVQPQSETVWRQANKYGVPRIVFVNKMDRIGANFYNVENQIKQRLKANPVPINIPIGAEDTFIGVIDLVQMKAIVWNNETMGAKYDVEEIPSDLLERAKEYREKLVEAIAEQDEALMEKYLGGEELSVEEIKKGIKIGCLNMSLVPMLCGSSFKNKGVQTLLDAVIDYLPAPTEVVDIKGIDPKTEEEVFVKSSDDGEFAGLAFKIMTDPFVGQLTFVRVYRGKLESGSYVYNSTKDKKERVGRLLKMHSNKREDIKEVYAGEICAFVGLKDTLTGDTLCDEKNAVVLERMEFPEPVIHIAVEPKTKADQEKMGVALGKLAEEDPSFRVMTQEETGQTLIGGMGELHLEIIVDRLKREFKVEAEIGQPQVAFRETIRSSVSKEHKYAKQSGGRGQYGHVFIKLEPKEPGSGYEFVNEISGGVIPKEYIPAVDKGIQEAMQNGVLAGYPVVDFKVTLYDGSYHDVDSSEMAFKIAGSMAFKEASRAANPVLLEPMMKVEVEVPEEYMGDVIGDLNRRRGQINSMDDRLGLKIVNAFVPLVEMFGYSTDLRSATQGRGTYSMEFDHYGEVPSNIAKEIVEKRKG</sequence>